<reference key="1">
    <citation type="journal article" date="1992" name="Plant Physiol.">
        <title>Primary structure of cytochrome b5 from cauliflower (Brassica oleracea L.) deduced from peptide and cDNA sequences.</title>
        <authorList>
            <person name="Kearns E.V."/>
            <person name="Keck P."/>
            <person name="Somerville C.R."/>
        </authorList>
    </citation>
    <scope>NUCLEOTIDE SEQUENCE [MRNA]</scope>
    <scope>PROTEIN SEQUENCE OF 6-47 AND 75-89</scope>
    <source>
        <strain>subvar. cauliflora</strain>
    </source>
</reference>
<protein>
    <recommendedName>
        <fullName>Cytochrome b5</fullName>
    </recommendedName>
</protein>
<name>CYB5_BRAOB</name>
<feature type="chain" id="PRO_0000166023" description="Cytochrome b5">
    <location>
        <begin position="1"/>
        <end position="134"/>
    </location>
</feature>
<feature type="transmembrane region" description="Helical" evidence="2">
    <location>
        <begin position="107"/>
        <end position="127"/>
    </location>
</feature>
<feature type="domain" description="Cytochrome b5 heme-binding" evidence="3">
    <location>
        <begin position="5"/>
        <end position="81"/>
    </location>
</feature>
<feature type="binding site" description="axial binding residue" evidence="3">
    <location>
        <position position="40"/>
    </location>
    <ligand>
        <name>heme</name>
        <dbReference type="ChEBI" id="CHEBI:30413"/>
    </ligand>
    <ligandPart>
        <name>Fe</name>
        <dbReference type="ChEBI" id="CHEBI:18248"/>
    </ligandPart>
</feature>
<feature type="binding site" description="axial binding residue" evidence="3">
    <location>
        <position position="64"/>
    </location>
    <ligand>
        <name>heme</name>
        <dbReference type="ChEBI" id="CHEBI:30413"/>
    </ligand>
    <ligandPart>
        <name>Fe</name>
        <dbReference type="ChEBI" id="CHEBI:18248"/>
    </ligandPart>
</feature>
<feature type="sequence variant">
    <original>K</original>
    <variation>N</variation>
    <location>
        <position position="5"/>
    </location>
</feature>
<comment type="function">
    <text>Membrane bound hemoprotein which function as an electron carrier for several membrane bound oxygenases.</text>
</comment>
<comment type="subcellular location">
    <subcellularLocation>
        <location evidence="1">Endoplasmic reticulum membrane</location>
        <topology evidence="1">Single-pass membrane protein</topology>
        <orientation evidence="1">Cytoplasmic side</orientation>
    </subcellularLocation>
    <subcellularLocation>
        <location evidence="1">Microsome membrane</location>
        <topology evidence="1">Single-pass membrane protein</topology>
        <orientation evidence="1">Cytoplasmic side</orientation>
    </subcellularLocation>
</comment>
<comment type="similarity">
    <text evidence="4">Belongs to the cytochrome b5 family.</text>
</comment>
<gene>
    <name type="primary">CYB5</name>
</gene>
<sequence>MASEKKVLGFEEVSQHNKTKDCWLIISGKVYDVTPFMDDHPGGDEVLLSSTGKDATNDFEDVGHSDTARDMMEKYYIGEIDSSTVPATRTYVAPVQPAYNQDKTPEFMIKILQFLVPILILGLALVVRQYTKKE</sequence>
<proteinExistence type="evidence at protein level"/>
<dbReference type="EMBL" id="M87514">
    <property type="protein sequence ID" value="AAA32990.1"/>
    <property type="molecule type" value="mRNA"/>
</dbReference>
<dbReference type="PIR" id="T14454">
    <property type="entry name" value="T14454"/>
</dbReference>
<dbReference type="SMR" id="P40934"/>
<dbReference type="GO" id="GO:0005789">
    <property type="term" value="C:endoplasmic reticulum membrane"/>
    <property type="evidence" value="ECO:0007669"/>
    <property type="project" value="UniProtKB-SubCell"/>
</dbReference>
<dbReference type="GO" id="GO:0020037">
    <property type="term" value="F:heme binding"/>
    <property type="evidence" value="ECO:0007669"/>
    <property type="project" value="InterPro"/>
</dbReference>
<dbReference type="GO" id="GO:0046872">
    <property type="term" value="F:metal ion binding"/>
    <property type="evidence" value="ECO:0007669"/>
    <property type="project" value="UniProtKB-KW"/>
</dbReference>
<dbReference type="FunFam" id="3.10.120.10:FF:000002">
    <property type="entry name" value="Cytochrome b5 type B"/>
    <property type="match status" value="1"/>
</dbReference>
<dbReference type="Gene3D" id="3.10.120.10">
    <property type="entry name" value="Cytochrome b5-like heme/steroid binding domain"/>
    <property type="match status" value="1"/>
</dbReference>
<dbReference type="InterPro" id="IPR001199">
    <property type="entry name" value="Cyt_B5-like_heme/steroid-bd"/>
</dbReference>
<dbReference type="InterPro" id="IPR036400">
    <property type="entry name" value="Cyt_B5-like_heme/steroid_sf"/>
</dbReference>
<dbReference type="InterPro" id="IPR018506">
    <property type="entry name" value="Cyt_B5_heme-BS"/>
</dbReference>
<dbReference type="InterPro" id="IPR050668">
    <property type="entry name" value="Cytochrome_b5"/>
</dbReference>
<dbReference type="PANTHER" id="PTHR19359">
    <property type="entry name" value="CYTOCHROME B5"/>
    <property type="match status" value="1"/>
</dbReference>
<dbReference type="PANTHER" id="PTHR19359:SF135">
    <property type="entry name" value="CYTOCHROME B5 ISOFORM E"/>
    <property type="match status" value="1"/>
</dbReference>
<dbReference type="Pfam" id="PF00173">
    <property type="entry name" value="Cyt-b5"/>
    <property type="match status" value="1"/>
</dbReference>
<dbReference type="PRINTS" id="PR00363">
    <property type="entry name" value="CYTOCHROMEB5"/>
</dbReference>
<dbReference type="SMART" id="SM01117">
    <property type="entry name" value="Cyt-b5"/>
    <property type="match status" value="1"/>
</dbReference>
<dbReference type="SUPFAM" id="SSF55856">
    <property type="entry name" value="Cytochrome b5-like heme/steroid binding domain"/>
    <property type="match status" value="1"/>
</dbReference>
<dbReference type="PROSITE" id="PS00191">
    <property type="entry name" value="CYTOCHROME_B5_1"/>
    <property type="match status" value="1"/>
</dbReference>
<dbReference type="PROSITE" id="PS50255">
    <property type="entry name" value="CYTOCHROME_B5_2"/>
    <property type="match status" value="1"/>
</dbReference>
<keyword id="KW-0903">Direct protein sequencing</keyword>
<keyword id="KW-0249">Electron transport</keyword>
<keyword id="KW-0256">Endoplasmic reticulum</keyword>
<keyword id="KW-0349">Heme</keyword>
<keyword id="KW-0408">Iron</keyword>
<keyword id="KW-0472">Membrane</keyword>
<keyword id="KW-0479">Metal-binding</keyword>
<keyword id="KW-0492">Microsome</keyword>
<keyword id="KW-0812">Transmembrane</keyword>
<keyword id="KW-1133">Transmembrane helix</keyword>
<keyword id="KW-0813">Transport</keyword>
<evidence type="ECO:0000250" key="1"/>
<evidence type="ECO:0000255" key="2"/>
<evidence type="ECO:0000255" key="3">
    <source>
        <dbReference type="PROSITE-ProRule" id="PRU00279"/>
    </source>
</evidence>
<evidence type="ECO:0000305" key="4"/>
<accession>P40934</accession>
<organism>
    <name type="scientific">Brassica oleracea var. botrytis</name>
    <name type="common">Cauliflower</name>
    <dbReference type="NCBI Taxonomy" id="3715"/>
    <lineage>
        <taxon>Eukaryota</taxon>
        <taxon>Viridiplantae</taxon>
        <taxon>Streptophyta</taxon>
        <taxon>Embryophyta</taxon>
        <taxon>Tracheophyta</taxon>
        <taxon>Spermatophyta</taxon>
        <taxon>Magnoliopsida</taxon>
        <taxon>eudicotyledons</taxon>
        <taxon>Gunneridae</taxon>
        <taxon>Pentapetalae</taxon>
        <taxon>rosids</taxon>
        <taxon>malvids</taxon>
        <taxon>Brassicales</taxon>
        <taxon>Brassicaceae</taxon>
        <taxon>Brassiceae</taxon>
        <taxon>Brassica</taxon>
    </lineage>
</organism>